<accession>Q636H3</accession>
<feature type="chain" id="PRO_0000189842" description="Phosphate acyltransferase">
    <location>
        <begin position="1"/>
        <end position="330"/>
    </location>
</feature>
<sequence>MKIAIDAMGGDHAPKAVVLGAMKAIKEYSDLHITLVGKEEEIRQYLTSEERITILHTDEKIESTDEPVRAVRRKKQASMVLAAQQVKDGVADACISAGSTGALMAAGLFVVGRMEGIERPALSPTMPTVDGEGFVMLDVGANVDAKPIHLYQYAVMGSVYAEKVRGIKNPRVGLLNVGTEDGKGNELSKQVFTMLKDAPINFVGNVESRDLLQGVADVVVCDGFTGNVALKSLEGTALALFSMLKEQLMSSFTSKLAAAVLKPKLMVLKDKMDYSEYGGAALFGLKAPVIKAHGSSNDQSIFSAIRQTREMVAKEVIPTISSVMEKEPLQ</sequence>
<gene>
    <name evidence="1" type="primary">plsX</name>
    <name type="ordered locus">BCE33L3612</name>
</gene>
<evidence type="ECO:0000255" key="1">
    <source>
        <dbReference type="HAMAP-Rule" id="MF_00019"/>
    </source>
</evidence>
<protein>
    <recommendedName>
        <fullName evidence="1">Phosphate acyltransferase</fullName>
        <ecNumber evidence="1">2.3.1.274</ecNumber>
    </recommendedName>
    <alternativeName>
        <fullName evidence="1">Acyl-ACP phosphotransacylase</fullName>
    </alternativeName>
    <alternativeName>
        <fullName evidence="1">Acyl-[acyl-carrier-protein]--phosphate acyltransferase</fullName>
    </alternativeName>
    <alternativeName>
        <fullName evidence="1">Phosphate-acyl-ACP acyltransferase</fullName>
    </alternativeName>
</protein>
<proteinExistence type="inferred from homology"/>
<organism>
    <name type="scientific">Bacillus cereus (strain ZK / E33L)</name>
    <dbReference type="NCBI Taxonomy" id="288681"/>
    <lineage>
        <taxon>Bacteria</taxon>
        <taxon>Bacillati</taxon>
        <taxon>Bacillota</taxon>
        <taxon>Bacilli</taxon>
        <taxon>Bacillales</taxon>
        <taxon>Bacillaceae</taxon>
        <taxon>Bacillus</taxon>
        <taxon>Bacillus cereus group</taxon>
    </lineage>
</organism>
<reference key="1">
    <citation type="journal article" date="2006" name="J. Bacteriol.">
        <title>Pathogenomic sequence analysis of Bacillus cereus and Bacillus thuringiensis isolates closely related to Bacillus anthracis.</title>
        <authorList>
            <person name="Han C.S."/>
            <person name="Xie G."/>
            <person name="Challacombe J.F."/>
            <person name="Altherr M.R."/>
            <person name="Bhotika S.S."/>
            <person name="Bruce D."/>
            <person name="Campbell C.S."/>
            <person name="Campbell M.L."/>
            <person name="Chen J."/>
            <person name="Chertkov O."/>
            <person name="Cleland C."/>
            <person name="Dimitrijevic M."/>
            <person name="Doggett N.A."/>
            <person name="Fawcett J.J."/>
            <person name="Glavina T."/>
            <person name="Goodwin L.A."/>
            <person name="Hill K.K."/>
            <person name="Hitchcock P."/>
            <person name="Jackson P.J."/>
            <person name="Keim P."/>
            <person name="Kewalramani A.R."/>
            <person name="Longmire J."/>
            <person name="Lucas S."/>
            <person name="Malfatti S."/>
            <person name="McMurry K."/>
            <person name="Meincke L.J."/>
            <person name="Misra M."/>
            <person name="Moseman B.L."/>
            <person name="Mundt M."/>
            <person name="Munk A.C."/>
            <person name="Okinaka R.T."/>
            <person name="Parson-Quintana B."/>
            <person name="Reilly L.P."/>
            <person name="Richardson P."/>
            <person name="Robinson D.L."/>
            <person name="Rubin E."/>
            <person name="Saunders E."/>
            <person name="Tapia R."/>
            <person name="Tesmer J.G."/>
            <person name="Thayer N."/>
            <person name="Thompson L.S."/>
            <person name="Tice H."/>
            <person name="Ticknor L.O."/>
            <person name="Wills P.L."/>
            <person name="Brettin T.S."/>
            <person name="Gilna P."/>
        </authorList>
    </citation>
    <scope>NUCLEOTIDE SEQUENCE [LARGE SCALE GENOMIC DNA]</scope>
    <source>
        <strain>ZK / E33L</strain>
    </source>
</reference>
<comment type="function">
    <text evidence="1">Catalyzes the reversible formation of acyl-phosphate (acyl-PO(4)) from acyl-[acyl-carrier-protein] (acyl-ACP). This enzyme utilizes acyl-ACP as fatty acyl donor, but not acyl-CoA.</text>
</comment>
<comment type="catalytic activity">
    <reaction evidence="1">
        <text>a fatty acyl-[ACP] + phosphate = an acyl phosphate + holo-[ACP]</text>
        <dbReference type="Rhea" id="RHEA:42292"/>
        <dbReference type="Rhea" id="RHEA-COMP:9685"/>
        <dbReference type="Rhea" id="RHEA-COMP:14125"/>
        <dbReference type="ChEBI" id="CHEBI:43474"/>
        <dbReference type="ChEBI" id="CHEBI:59918"/>
        <dbReference type="ChEBI" id="CHEBI:64479"/>
        <dbReference type="ChEBI" id="CHEBI:138651"/>
        <dbReference type="EC" id="2.3.1.274"/>
    </reaction>
</comment>
<comment type="pathway">
    <text evidence="1">Lipid metabolism; phospholipid metabolism.</text>
</comment>
<comment type="subunit">
    <text evidence="1">Homodimer. Probably interacts with PlsY.</text>
</comment>
<comment type="subcellular location">
    <subcellularLocation>
        <location evidence="1">Cytoplasm</location>
    </subcellularLocation>
    <text evidence="1">Associated with the membrane possibly through PlsY.</text>
</comment>
<comment type="similarity">
    <text evidence="1">Belongs to the PlsX family.</text>
</comment>
<dbReference type="EC" id="2.3.1.274" evidence="1"/>
<dbReference type="EMBL" id="CP000001">
    <property type="protein sequence ID" value="AAU16657.1"/>
    <property type="molecule type" value="Genomic_DNA"/>
</dbReference>
<dbReference type="RefSeq" id="WP_000684110.1">
    <property type="nucleotide sequence ID" value="NZ_CP009968.1"/>
</dbReference>
<dbReference type="SMR" id="Q636H3"/>
<dbReference type="KEGG" id="bcz:BCE33L3612"/>
<dbReference type="PATRIC" id="fig|288681.22.peg.1799"/>
<dbReference type="UniPathway" id="UPA00085"/>
<dbReference type="Proteomes" id="UP000002612">
    <property type="component" value="Chromosome"/>
</dbReference>
<dbReference type="GO" id="GO:0005737">
    <property type="term" value="C:cytoplasm"/>
    <property type="evidence" value="ECO:0007669"/>
    <property type="project" value="UniProtKB-SubCell"/>
</dbReference>
<dbReference type="GO" id="GO:0043811">
    <property type="term" value="F:phosphate:acyl-[acyl carrier protein] acyltransferase activity"/>
    <property type="evidence" value="ECO:0007669"/>
    <property type="project" value="UniProtKB-UniRule"/>
</dbReference>
<dbReference type="GO" id="GO:0006633">
    <property type="term" value="P:fatty acid biosynthetic process"/>
    <property type="evidence" value="ECO:0007669"/>
    <property type="project" value="UniProtKB-UniRule"/>
</dbReference>
<dbReference type="GO" id="GO:0008654">
    <property type="term" value="P:phospholipid biosynthetic process"/>
    <property type="evidence" value="ECO:0007669"/>
    <property type="project" value="UniProtKB-KW"/>
</dbReference>
<dbReference type="Gene3D" id="3.40.718.10">
    <property type="entry name" value="Isopropylmalate Dehydrogenase"/>
    <property type="match status" value="1"/>
</dbReference>
<dbReference type="HAMAP" id="MF_00019">
    <property type="entry name" value="PlsX"/>
    <property type="match status" value="1"/>
</dbReference>
<dbReference type="InterPro" id="IPR003664">
    <property type="entry name" value="FA_synthesis"/>
</dbReference>
<dbReference type="InterPro" id="IPR012281">
    <property type="entry name" value="Phospholipid_synth_PlsX-like"/>
</dbReference>
<dbReference type="NCBIfam" id="TIGR00182">
    <property type="entry name" value="plsX"/>
    <property type="match status" value="1"/>
</dbReference>
<dbReference type="PANTHER" id="PTHR30100">
    <property type="entry name" value="FATTY ACID/PHOSPHOLIPID SYNTHESIS PROTEIN PLSX"/>
    <property type="match status" value="1"/>
</dbReference>
<dbReference type="PANTHER" id="PTHR30100:SF1">
    <property type="entry name" value="PHOSPHATE ACYLTRANSFERASE"/>
    <property type="match status" value="1"/>
</dbReference>
<dbReference type="Pfam" id="PF02504">
    <property type="entry name" value="FA_synthesis"/>
    <property type="match status" value="1"/>
</dbReference>
<dbReference type="PIRSF" id="PIRSF002465">
    <property type="entry name" value="Phsphlp_syn_PlsX"/>
    <property type="match status" value="1"/>
</dbReference>
<dbReference type="SUPFAM" id="SSF53659">
    <property type="entry name" value="Isocitrate/Isopropylmalate dehydrogenase-like"/>
    <property type="match status" value="1"/>
</dbReference>
<keyword id="KW-0963">Cytoplasm</keyword>
<keyword id="KW-0444">Lipid biosynthesis</keyword>
<keyword id="KW-0443">Lipid metabolism</keyword>
<keyword id="KW-0594">Phospholipid biosynthesis</keyword>
<keyword id="KW-1208">Phospholipid metabolism</keyword>
<keyword id="KW-0808">Transferase</keyword>
<name>PLSX_BACCZ</name>